<proteinExistence type="inferred from homology"/>
<keyword id="KW-0150">Chloroplast</keyword>
<keyword id="KW-0472">Membrane</keyword>
<keyword id="KW-0602">Photosynthesis</keyword>
<keyword id="KW-0604">Photosystem II</keyword>
<keyword id="KW-0934">Plastid</keyword>
<keyword id="KW-0674">Reaction center</keyword>
<keyword id="KW-1185">Reference proteome</keyword>
<keyword id="KW-0793">Thylakoid</keyword>
<keyword id="KW-0812">Transmembrane</keyword>
<keyword id="KW-1133">Transmembrane helix</keyword>
<dbReference type="EMBL" id="CR954199">
    <property type="protein sequence ID" value="CAL36339.1"/>
    <property type="molecule type" value="Genomic_DNA"/>
</dbReference>
<dbReference type="RefSeq" id="XP_022839429.1">
    <property type="nucleotide sequence ID" value="XM_022983797.1"/>
</dbReference>
<dbReference type="RefSeq" id="YP_717217.1">
    <property type="nucleotide sequence ID" value="NC_008289.1"/>
</dbReference>
<dbReference type="SMR" id="Q0P3N8"/>
<dbReference type="FunCoup" id="Q0P3N8">
    <property type="interactions" value="60"/>
</dbReference>
<dbReference type="STRING" id="70448.Q0P3N8"/>
<dbReference type="GeneID" id="34945983"/>
<dbReference type="GeneID" id="4238890"/>
<dbReference type="KEGG" id="ota:OstapCp14"/>
<dbReference type="eggNOG" id="ENOG502SFCU">
    <property type="taxonomic scope" value="Eukaryota"/>
</dbReference>
<dbReference type="InParanoid" id="Q0P3N8"/>
<dbReference type="OrthoDB" id="99at2759"/>
<dbReference type="Proteomes" id="UP000009170">
    <property type="component" value="Chloroplast"/>
</dbReference>
<dbReference type="GO" id="GO:0009535">
    <property type="term" value="C:chloroplast thylakoid membrane"/>
    <property type="evidence" value="ECO:0007669"/>
    <property type="project" value="UniProtKB-SubCell"/>
</dbReference>
<dbReference type="GO" id="GO:0009539">
    <property type="term" value="C:photosystem II reaction center"/>
    <property type="evidence" value="ECO:0007669"/>
    <property type="project" value="InterPro"/>
</dbReference>
<dbReference type="GO" id="GO:0015979">
    <property type="term" value="P:photosynthesis"/>
    <property type="evidence" value="ECO:0007669"/>
    <property type="project" value="UniProtKB-UniRule"/>
</dbReference>
<dbReference type="HAMAP" id="MF_01317">
    <property type="entry name" value="PSII_PsbL"/>
    <property type="match status" value="1"/>
</dbReference>
<dbReference type="InterPro" id="IPR003372">
    <property type="entry name" value="PSII_PsbL"/>
</dbReference>
<dbReference type="InterPro" id="IPR037266">
    <property type="entry name" value="PSII_PsbL_sf"/>
</dbReference>
<dbReference type="NCBIfam" id="NF001972">
    <property type="entry name" value="PRK00753.1"/>
    <property type="match status" value="1"/>
</dbReference>
<dbReference type="Pfam" id="PF02419">
    <property type="entry name" value="PsbL"/>
    <property type="match status" value="1"/>
</dbReference>
<dbReference type="SUPFAM" id="SSF161017">
    <property type="entry name" value="Photosystem II reaction center protein L, PsbL"/>
    <property type="match status" value="1"/>
</dbReference>
<reference key="1">
    <citation type="journal article" date="2007" name="Mol. Biol. Evol.">
        <title>The complete chloroplast and mitochondrial DNA sequence of Ostreococcus tauri: organelle genomes of the smallest eukaryote are examples of compaction.</title>
        <authorList>
            <person name="Robbens S."/>
            <person name="Derelle E."/>
            <person name="Ferraz C."/>
            <person name="Wuyts J."/>
            <person name="Moreau H."/>
            <person name="Van de Peer Y."/>
        </authorList>
    </citation>
    <scope>NUCLEOTIDE SEQUENCE [LARGE SCALE GENOMIC DNA]</scope>
    <source>
        <strain>OTTH0595</strain>
    </source>
</reference>
<gene>
    <name evidence="1" type="primary">psbL</name>
    <name type="ordered locus">OtCpg00140</name>
</gene>
<organism>
    <name type="scientific">Ostreococcus tauri</name>
    <dbReference type="NCBI Taxonomy" id="70448"/>
    <lineage>
        <taxon>Eukaryota</taxon>
        <taxon>Viridiplantae</taxon>
        <taxon>Chlorophyta</taxon>
        <taxon>Mamiellophyceae</taxon>
        <taxon>Mamiellales</taxon>
        <taxon>Bathycoccaceae</taxon>
        <taxon>Ostreococcus</taxon>
    </lineage>
</organism>
<sequence length="38" mass="4418">MTNPNPNKQTVELNRTSLYWGLLLIFVLAVLFSSYIFN</sequence>
<accession>Q0P3N8</accession>
<protein>
    <recommendedName>
        <fullName evidence="1">Photosystem II reaction center protein L</fullName>
        <shortName evidence="1">PSII-L</shortName>
    </recommendedName>
</protein>
<evidence type="ECO:0000255" key="1">
    <source>
        <dbReference type="HAMAP-Rule" id="MF_01317"/>
    </source>
</evidence>
<geneLocation type="chloroplast"/>
<name>PSBL_OSTTA</name>
<feature type="chain" id="PRO_0000276215" description="Photosystem II reaction center protein L">
    <location>
        <begin position="1"/>
        <end position="38"/>
    </location>
</feature>
<feature type="transmembrane region" description="Helical" evidence="1">
    <location>
        <begin position="17"/>
        <end position="37"/>
    </location>
</feature>
<comment type="function">
    <text evidence="1">One of the components of the core complex of photosystem II (PSII). PSII is a light-driven water:plastoquinone oxidoreductase that uses light energy to abstract electrons from H(2)O, generating O(2) and a proton gradient subsequently used for ATP formation. It consists of a core antenna complex that captures photons, and an electron transfer chain that converts photonic excitation into a charge separation. This subunit is found at the monomer-monomer interface and is required for correct PSII assembly and/or dimerization.</text>
</comment>
<comment type="subunit">
    <text evidence="1">PSII is composed of 1 copy each of membrane proteins PsbA, PsbB, PsbC, PsbD, PsbE, PsbF, PsbH, PsbI, PsbJ, PsbK, PsbL, PsbM, PsbT, PsbX, PsbY, PsbZ, Psb30/Ycf12, at least 3 peripheral proteins of the oxygen-evolving complex and a large number of cofactors. It forms dimeric complexes.</text>
</comment>
<comment type="subcellular location">
    <subcellularLocation>
        <location evidence="1">Plastid</location>
        <location evidence="1">Chloroplast thylakoid membrane</location>
        <topology evidence="1">Single-pass membrane protein</topology>
    </subcellularLocation>
</comment>
<comment type="similarity">
    <text evidence="1">Belongs to the PsbL family.</text>
</comment>